<evidence type="ECO:0000255" key="1">
    <source>
        <dbReference type="HAMAP-Rule" id="MF_00791"/>
    </source>
</evidence>
<accession>Q326I3</accession>
<proteinExistence type="inferred from homology"/>
<feature type="chain" id="PRO_1000083659" description="Protein ApaG">
    <location>
        <begin position="1"/>
        <end position="125"/>
    </location>
</feature>
<feature type="domain" description="ApaG" evidence="1">
    <location>
        <begin position="1"/>
        <end position="125"/>
    </location>
</feature>
<dbReference type="EMBL" id="CP000036">
    <property type="protein sequence ID" value="ABB64775.1"/>
    <property type="molecule type" value="Genomic_DNA"/>
</dbReference>
<dbReference type="RefSeq" id="WP_000610901.1">
    <property type="nucleotide sequence ID" value="NC_007613.1"/>
</dbReference>
<dbReference type="SMR" id="Q326I3"/>
<dbReference type="GeneID" id="93777385"/>
<dbReference type="KEGG" id="sbo:SBO_0039"/>
<dbReference type="HOGENOM" id="CLU_128074_0_0_6"/>
<dbReference type="Proteomes" id="UP000007067">
    <property type="component" value="Chromosome"/>
</dbReference>
<dbReference type="GO" id="GO:0070987">
    <property type="term" value="P:error-free translesion synthesis"/>
    <property type="evidence" value="ECO:0007669"/>
    <property type="project" value="TreeGrafter"/>
</dbReference>
<dbReference type="Gene3D" id="2.60.40.1470">
    <property type="entry name" value="ApaG domain"/>
    <property type="match status" value="1"/>
</dbReference>
<dbReference type="HAMAP" id="MF_00791">
    <property type="entry name" value="ApaG"/>
    <property type="match status" value="1"/>
</dbReference>
<dbReference type="InterPro" id="IPR007474">
    <property type="entry name" value="ApaG_domain"/>
</dbReference>
<dbReference type="InterPro" id="IPR036767">
    <property type="entry name" value="ApaG_sf"/>
</dbReference>
<dbReference type="InterPro" id="IPR023065">
    <property type="entry name" value="Uncharacterised_ApaG"/>
</dbReference>
<dbReference type="NCBIfam" id="NF003967">
    <property type="entry name" value="PRK05461.1"/>
    <property type="match status" value="1"/>
</dbReference>
<dbReference type="PANTHER" id="PTHR14289">
    <property type="entry name" value="F-BOX ONLY PROTEIN 3"/>
    <property type="match status" value="1"/>
</dbReference>
<dbReference type="PANTHER" id="PTHR14289:SF16">
    <property type="entry name" value="POLYMERASE DELTA-INTERACTING PROTEIN 2"/>
    <property type="match status" value="1"/>
</dbReference>
<dbReference type="Pfam" id="PF04379">
    <property type="entry name" value="DUF525"/>
    <property type="match status" value="1"/>
</dbReference>
<dbReference type="SUPFAM" id="SSF110069">
    <property type="entry name" value="ApaG-like"/>
    <property type="match status" value="1"/>
</dbReference>
<dbReference type="PROSITE" id="PS51087">
    <property type="entry name" value="APAG"/>
    <property type="match status" value="1"/>
</dbReference>
<organism>
    <name type="scientific">Shigella boydii serotype 4 (strain Sb227)</name>
    <dbReference type="NCBI Taxonomy" id="300268"/>
    <lineage>
        <taxon>Bacteria</taxon>
        <taxon>Pseudomonadati</taxon>
        <taxon>Pseudomonadota</taxon>
        <taxon>Gammaproteobacteria</taxon>
        <taxon>Enterobacterales</taxon>
        <taxon>Enterobacteriaceae</taxon>
        <taxon>Shigella</taxon>
    </lineage>
</organism>
<sequence length="125" mass="13867">MINSPRVCIQVQSVYIEAQSSPDNERYVFAYTVTIRNLGRAPVQLLGRYWLITNGNGRETEVQGEGVVGVQPLIAPGEEYQYTSGAIIETPLGTMQGHYEMIDENGVPFSIDIPVFRLAVPTLIH</sequence>
<gene>
    <name evidence="1" type="primary">apaG</name>
    <name type="ordered locus">SBO_0039</name>
</gene>
<reference key="1">
    <citation type="journal article" date="2005" name="Nucleic Acids Res.">
        <title>Genome dynamics and diversity of Shigella species, the etiologic agents of bacillary dysentery.</title>
        <authorList>
            <person name="Yang F."/>
            <person name="Yang J."/>
            <person name="Zhang X."/>
            <person name="Chen L."/>
            <person name="Jiang Y."/>
            <person name="Yan Y."/>
            <person name="Tang X."/>
            <person name="Wang J."/>
            <person name="Xiong Z."/>
            <person name="Dong J."/>
            <person name="Xue Y."/>
            <person name="Zhu Y."/>
            <person name="Xu X."/>
            <person name="Sun L."/>
            <person name="Chen S."/>
            <person name="Nie H."/>
            <person name="Peng J."/>
            <person name="Xu J."/>
            <person name="Wang Y."/>
            <person name="Yuan Z."/>
            <person name="Wen Y."/>
            <person name="Yao Z."/>
            <person name="Shen Y."/>
            <person name="Qiang B."/>
            <person name="Hou Y."/>
            <person name="Yu J."/>
            <person name="Jin Q."/>
        </authorList>
    </citation>
    <scope>NUCLEOTIDE SEQUENCE [LARGE SCALE GENOMIC DNA]</scope>
    <source>
        <strain>Sb227</strain>
    </source>
</reference>
<name>APAG_SHIBS</name>
<protein>
    <recommendedName>
        <fullName evidence="1">Protein ApaG</fullName>
    </recommendedName>
</protein>